<protein>
    <recommendedName>
        <fullName evidence="1">Bifunctional protein FolD</fullName>
    </recommendedName>
    <domain>
        <recommendedName>
            <fullName evidence="1">Methylenetetrahydrofolate dehydrogenase</fullName>
            <ecNumber evidence="1">1.5.1.5</ecNumber>
        </recommendedName>
    </domain>
    <domain>
        <recommendedName>
            <fullName evidence="1">Methenyltetrahydrofolate cyclohydrolase</fullName>
            <ecNumber evidence="1">3.5.4.9</ecNumber>
        </recommendedName>
    </domain>
</protein>
<reference key="1">
    <citation type="book" date="2006" name="Gram positive pathogens, 2nd edition">
        <title>The Staphylococcus aureus NCTC 8325 genome.</title>
        <editorList>
            <person name="Fischetti V."/>
            <person name="Novick R."/>
            <person name="Ferretti J."/>
            <person name="Portnoy D."/>
            <person name="Rood J."/>
        </editorList>
        <authorList>
            <person name="Gillaspy A.F."/>
            <person name="Worrell V."/>
            <person name="Orvis J."/>
            <person name="Roe B.A."/>
            <person name="Dyer D.W."/>
            <person name="Iandolo J.J."/>
        </authorList>
    </citation>
    <scope>NUCLEOTIDE SEQUENCE [LARGE SCALE GENOMIC DNA]</scope>
    <source>
        <strain>NCTC 8325 / PS 47</strain>
    </source>
</reference>
<sequence length="286" mass="30844">MVAKILDGKQIAKDYRQGLQDQVEALKEKGFTPKLSVILVGNDGASQSYVRSKKKAAEKIGMISEIVHLEETATEEEVLNELNRLNNDDSVSGILVQVPLPKQVSEQKILEAINPEKDVDGFHPINIGKLYIDEQTFVPCTPLGIMEILKHADIDLEGKNAVVIGRSHIVGQPVSKLLLQKNASVTILHSRSKDMASYLKDADVIVSAVGKPGLVTKDVVKEGAVIIDVGNTPDENGKLKGDVDYDAVKEIAGAITPVPGGVGPLTITMVLNNTLLAEKMRRGIDS</sequence>
<proteinExistence type="inferred from homology"/>
<keyword id="KW-0028">Amino-acid biosynthesis</keyword>
<keyword id="KW-0368">Histidine biosynthesis</keyword>
<keyword id="KW-0378">Hydrolase</keyword>
<keyword id="KW-0486">Methionine biosynthesis</keyword>
<keyword id="KW-0511">Multifunctional enzyme</keyword>
<keyword id="KW-0521">NADP</keyword>
<keyword id="KW-0554">One-carbon metabolism</keyword>
<keyword id="KW-0560">Oxidoreductase</keyword>
<keyword id="KW-0658">Purine biosynthesis</keyword>
<keyword id="KW-1185">Reference proteome</keyword>
<dbReference type="EC" id="1.5.1.5" evidence="1"/>
<dbReference type="EC" id="3.5.4.9" evidence="1"/>
<dbReference type="EMBL" id="CP000253">
    <property type="protein sequence ID" value="ABD30129.1"/>
    <property type="molecule type" value="Genomic_DNA"/>
</dbReference>
<dbReference type="RefSeq" id="WP_000225837.1">
    <property type="nucleotide sequence ID" value="NZ_LS483365.1"/>
</dbReference>
<dbReference type="RefSeq" id="YP_499557.1">
    <property type="nucleotide sequence ID" value="NC_007795.1"/>
</dbReference>
<dbReference type="SMR" id="Q2FZJ6"/>
<dbReference type="STRING" id="93061.SAOUHSC_01007"/>
<dbReference type="PaxDb" id="1280-SAXN108_1060"/>
<dbReference type="GeneID" id="3920405"/>
<dbReference type="KEGG" id="sao:SAOUHSC_01007"/>
<dbReference type="PATRIC" id="fig|93061.5.peg.922"/>
<dbReference type="eggNOG" id="COG0190">
    <property type="taxonomic scope" value="Bacteria"/>
</dbReference>
<dbReference type="HOGENOM" id="CLU_034045_2_1_9"/>
<dbReference type="OrthoDB" id="9803580at2"/>
<dbReference type="UniPathway" id="UPA00193"/>
<dbReference type="PRO" id="PR:Q2FZJ6"/>
<dbReference type="Proteomes" id="UP000008816">
    <property type="component" value="Chromosome"/>
</dbReference>
<dbReference type="GO" id="GO:0005829">
    <property type="term" value="C:cytosol"/>
    <property type="evidence" value="ECO:0000318"/>
    <property type="project" value="GO_Central"/>
</dbReference>
<dbReference type="GO" id="GO:0004477">
    <property type="term" value="F:methenyltetrahydrofolate cyclohydrolase activity"/>
    <property type="evidence" value="ECO:0000318"/>
    <property type="project" value="GO_Central"/>
</dbReference>
<dbReference type="GO" id="GO:0004488">
    <property type="term" value="F:methylenetetrahydrofolate dehydrogenase (NADP+) activity"/>
    <property type="evidence" value="ECO:0000318"/>
    <property type="project" value="GO_Central"/>
</dbReference>
<dbReference type="GO" id="GO:0000105">
    <property type="term" value="P:L-histidine biosynthetic process"/>
    <property type="evidence" value="ECO:0007669"/>
    <property type="project" value="UniProtKB-KW"/>
</dbReference>
<dbReference type="GO" id="GO:0009086">
    <property type="term" value="P:methionine biosynthetic process"/>
    <property type="evidence" value="ECO:0007669"/>
    <property type="project" value="UniProtKB-KW"/>
</dbReference>
<dbReference type="GO" id="GO:0006164">
    <property type="term" value="P:purine nucleotide biosynthetic process"/>
    <property type="evidence" value="ECO:0007669"/>
    <property type="project" value="UniProtKB-KW"/>
</dbReference>
<dbReference type="GO" id="GO:0035999">
    <property type="term" value="P:tetrahydrofolate interconversion"/>
    <property type="evidence" value="ECO:0000318"/>
    <property type="project" value="GO_Central"/>
</dbReference>
<dbReference type="CDD" id="cd01080">
    <property type="entry name" value="NAD_bind_m-THF_DH_Cyclohyd"/>
    <property type="match status" value="1"/>
</dbReference>
<dbReference type="FunFam" id="3.40.50.10860:FF:000001">
    <property type="entry name" value="Bifunctional protein FolD"/>
    <property type="match status" value="1"/>
</dbReference>
<dbReference type="FunFam" id="3.40.50.720:FF:000094">
    <property type="entry name" value="Bifunctional protein FolD"/>
    <property type="match status" value="1"/>
</dbReference>
<dbReference type="Gene3D" id="3.40.50.10860">
    <property type="entry name" value="Leucine Dehydrogenase, chain A, domain 1"/>
    <property type="match status" value="1"/>
</dbReference>
<dbReference type="Gene3D" id="3.40.50.720">
    <property type="entry name" value="NAD(P)-binding Rossmann-like Domain"/>
    <property type="match status" value="1"/>
</dbReference>
<dbReference type="HAMAP" id="MF_01576">
    <property type="entry name" value="THF_DHG_CYH"/>
    <property type="match status" value="1"/>
</dbReference>
<dbReference type="InterPro" id="IPR046346">
    <property type="entry name" value="Aminoacid_DH-like_N_sf"/>
</dbReference>
<dbReference type="InterPro" id="IPR036291">
    <property type="entry name" value="NAD(P)-bd_dom_sf"/>
</dbReference>
<dbReference type="InterPro" id="IPR000672">
    <property type="entry name" value="THF_DH/CycHdrlase"/>
</dbReference>
<dbReference type="InterPro" id="IPR020630">
    <property type="entry name" value="THF_DH/CycHdrlase_cat_dom"/>
</dbReference>
<dbReference type="InterPro" id="IPR020631">
    <property type="entry name" value="THF_DH/CycHdrlase_NAD-bd_dom"/>
</dbReference>
<dbReference type="NCBIfam" id="NF010772">
    <property type="entry name" value="PRK14175.1"/>
    <property type="match status" value="1"/>
</dbReference>
<dbReference type="PANTHER" id="PTHR48099:SF5">
    <property type="entry name" value="C-1-TETRAHYDROFOLATE SYNTHASE, CYTOPLASMIC"/>
    <property type="match status" value="1"/>
</dbReference>
<dbReference type="PANTHER" id="PTHR48099">
    <property type="entry name" value="C-1-TETRAHYDROFOLATE SYNTHASE, CYTOPLASMIC-RELATED"/>
    <property type="match status" value="1"/>
</dbReference>
<dbReference type="Pfam" id="PF00763">
    <property type="entry name" value="THF_DHG_CYH"/>
    <property type="match status" value="1"/>
</dbReference>
<dbReference type="Pfam" id="PF02882">
    <property type="entry name" value="THF_DHG_CYH_C"/>
    <property type="match status" value="1"/>
</dbReference>
<dbReference type="PRINTS" id="PR00085">
    <property type="entry name" value="THFDHDRGNASE"/>
</dbReference>
<dbReference type="SUPFAM" id="SSF53223">
    <property type="entry name" value="Aminoacid dehydrogenase-like, N-terminal domain"/>
    <property type="match status" value="1"/>
</dbReference>
<dbReference type="SUPFAM" id="SSF51735">
    <property type="entry name" value="NAD(P)-binding Rossmann-fold domains"/>
    <property type="match status" value="1"/>
</dbReference>
<comment type="function">
    <text evidence="1">Catalyzes the oxidation of 5,10-methylenetetrahydrofolate to 5,10-methenyltetrahydrofolate and then the hydrolysis of 5,10-methenyltetrahydrofolate to 10-formyltetrahydrofolate.</text>
</comment>
<comment type="catalytic activity">
    <reaction evidence="1">
        <text>(6R)-5,10-methylene-5,6,7,8-tetrahydrofolate + NADP(+) = (6R)-5,10-methenyltetrahydrofolate + NADPH</text>
        <dbReference type="Rhea" id="RHEA:22812"/>
        <dbReference type="ChEBI" id="CHEBI:15636"/>
        <dbReference type="ChEBI" id="CHEBI:57455"/>
        <dbReference type="ChEBI" id="CHEBI:57783"/>
        <dbReference type="ChEBI" id="CHEBI:58349"/>
        <dbReference type="EC" id="1.5.1.5"/>
    </reaction>
</comment>
<comment type="catalytic activity">
    <reaction evidence="1">
        <text>(6R)-5,10-methenyltetrahydrofolate + H2O = (6R)-10-formyltetrahydrofolate + H(+)</text>
        <dbReference type="Rhea" id="RHEA:23700"/>
        <dbReference type="ChEBI" id="CHEBI:15377"/>
        <dbReference type="ChEBI" id="CHEBI:15378"/>
        <dbReference type="ChEBI" id="CHEBI:57455"/>
        <dbReference type="ChEBI" id="CHEBI:195366"/>
        <dbReference type="EC" id="3.5.4.9"/>
    </reaction>
</comment>
<comment type="pathway">
    <text evidence="1">One-carbon metabolism; tetrahydrofolate interconversion.</text>
</comment>
<comment type="subunit">
    <text evidence="1">Homodimer.</text>
</comment>
<comment type="similarity">
    <text evidence="1">Belongs to the tetrahydrofolate dehydrogenase/cyclohydrolase family.</text>
</comment>
<gene>
    <name evidence="1" type="primary">folD</name>
    <name type="ordered locus">SAOUHSC_01007</name>
</gene>
<feature type="chain" id="PRO_0000265943" description="Bifunctional protein FolD">
    <location>
        <begin position="1"/>
        <end position="286"/>
    </location>
</feature>
<feature type="binding site" evidence="1">
    <location>
        <begin position="165"/>
        <end position="167"/>
    </location>
    <ligand>
        <name>NADP(+)</name>
        <dbReference type="ChEBI" id="CHEBI:58349"/>
    </ligand>
</feature>
<feature type="binding site" evidence="1">
    <location>
        <position position="190"/>
    </location>
    <ligand>
        <name>NADP(+)</name>
        <dbReference type="ChEBI" id="CHEBI:58349"/>
    </ligand>
</feature>
<evidence type="ECO:0000255" key="1">
    <source>
        <dbReference type="HAMAP-Rule" id="MF_01576"/>
    </source>
</evidence>
<accession>Q2FZJ6</accession>
<name>FOLD_STAA8</name>
<organism>
    <name type="scientific">Staphylococcus aureus (strain NCTC 8325 / PS 47)</name>
    <dbReference type="NCBI Taxonomy" id="93061"/>
    <lineage>
        <taxon>Bacteria</taxon>
        <taxon>Bacillati</taxon>
        <taxon>Bacillota</taxon>
        <taxon>Bacilli</taxon>
        <taxon>Bacillales</taxon>
        <taxon>Staphylococcaceae</taxon>
        <taxon>Staphylococcus</taxon>
    </lineage>
</organism>